<keyword id="KW-0031">Aminopeptidase</keyword>
<keyword id="KW-0963">Cytoplasm</keyword>
<keyword id="KW-0378">Hydrolase</keyword>
<keyword id="KW-0464">Manganese</keyword>
<keyword id="KW-0479">Metal-binding</keyword>
<keyword id="KW-0645">Protease</keyword>
<keyword id="KW-1185">Reference proteome</keyword>
<sequence>MNFRCSSAPLAELGCDGVALGLFSSSWQQQLAALLPAMAAQLQPLLEQREFKAKGGEKHSFSFPGQQPSLVIISGLGEPDSFDGLALRKAAASLALASRGSNLKALALGLPIEAFAPDQALTALMQGCRLALYKDERFRSENKPSLDPGEIVLQGLASELDQQLAQQEAICQGVMLARELVAAPPNVVNALSLESTARSIADQFGCELTVLDEAACRERGMGAYLAVAQGASIPPRFLHLVIRPQGPVKRKLALVGKGLTFDSGGYNLKVGGSQIELMKFDMGGCGAVLGAARTLAELKLEGLEIHVISAATENMVSAEAIYPGAIVTASNGKTIEINNTDAEGRLTLADALVYACGLEPDAIVDLATLTGACVIALGDEIAGYWSPDDGLAQQLNDAAHRAGEGLWRMPLQSSYKDGLKSGLADMKNTGPRPGGSITAALFLKEFVKPEIPWAHIDIAGPVWSDKGRSTDPSGATGYGVRTLVEWCQAVAADAKEGLSQG</sequence>
<gene>
    <name evidence="1" type="primary">pepA</name>
    <name type="ordered locus">SynRCC307_1809</name>
</gene>
<accession>A5GV03</accession>
<reference key="1">
    <citation type="submission" date="2006-05" db="EMBL/GenBank/DDBJ databases">
        <authorList>
            <consortium name="Genoscope"/>
        </authorList>
    </citation>
    <scope>NUCLEOTIDE SEQUENCE [LARGE SCALE GENOMIC DNA]</scope>
    <source>
        <strain>RCC307</strain>
    </source>
</reference>
<evidence type="ECO:0000255" key="1">
    <source>
        <dbReference type="HAMAP-Rule" id="MF_00181"/>
    </source>
</evidence>
<name>AMPA_SYNR3</name>
<comment type="function">
    <text evidence="1">Presumably involved in the processing and regular turnover of intracellular proteins. Catalyzes the removal of unsubstituted N-terminal amino acids from various peptides.</text>
</comment>
<comment type="catalytic activity">
    <reaction evidence="1">
        <text>Release of an N-terminal amino acid, Xaa-|-Yaa-, in which Xaa is preferably Leu, but may be other amino acids including Pro although not Arg or Lys, and Yaa may be Pro. Amino acid amides and methyl esters are also readily hydrolyzed, but rates on arylamides are exceedingly low.</text>
        <dbReference type="EC" id="3.4.11.1"/>
    </reaction>
</comment>
<comment type="catalytic activity">
    <reaction evidence="1">
        <text>Release of an N-terminal amino acid, preferentially leucine, but not glutamic or aspartic acids.</text>
        <dbReference type="EC" id="3.4.11.10"/>
    </reaction>
</comment>
<comment type="cofactor">
    <cofactor evidence="1">
        <name>Mn(2+)</name>
        <dbReference type="ChEBI" id="CHEBI:29035"/>
    </cofactor>
    <text evidence="1">Binds 2 manganese ions per subunit.</text>
</comment>
<comment type="subcellular location">
    <subcellularLocation>
        <location evidence="1">Cytoplasm</location>
    </subcellularLocation>
</comment>
<comment type="similarity">
    <text evidence="1">Belongs to the peptidase M17 family.</text>
</comment>
<protein>
    <recommendedName>
        <fullName evidence="1">Probable cytosol aminopeptidase</fullName>
        <ecNumber evidence="1">3.4.11.1</ecNumber>
    </recommendedName>
    <alternativeName>
        <fullName evidence="1">Leucine aminopeptidase</fullName>
        <shortName evidence="1">LAP</shortName>
        <ecNumber evidence="1">3.4.11.10</ecNumber>
    </alternativeName>
    <alternativeName>
        <fullName evidence="1">Leucyl aminopeptidase</fullName>
    </alternativeName>
</protein>
<proteinExistence type="inferred from homology"/>
<dbReference type="EC" id="3.4.11.1" evidence="1"/>
<dbReference type="EC" id="3.4.11.10" evidence="1"/>
<dbReference type="EMBL" id="CT978603">
    <property type="protein sequence ID" value="CAK28712.1"/>
    <property type="molecule type" value="Genomic_DNA"/>
</dbReference>
<dbReference type="SMR" id="A5GV03"/>
<dbReference type="STRING" id="316278.SynRCC307_1809"/>
<dbReference type="MEROPS" id="M17.A03"/>
<dbReference type="KEGG" id="syr:SynRCC307_1809"/>
<dbReference type="eggNOG" id="COG0260">
    <property type="taxonomic scope" value="Bacteria"/>
</dbReference>
<dbReference type="HOGENOM" id="CLU_013734_5_1_3"/>
<dbReference type="OrthoDB" id="9809354at2"/>
<dbReference type="Proteomes" id="UP000001115">
    <property type="component" value="Chromosome"/>
</dbReference>
<dbReference type="GO" id="GO:0005737">
    <property type="term" value="C:cytoplasm"/>
    <property type="evidence" value="ECO:0007669"/>
    <property type="project" value="UniProtKB-SubCell"/>
</dbReference>
<dbReference type="GO" id="GO:0030145">
    <property type="term" value="F:manganese ion binding"/>
    <property type="evidence" value="ECO:0007669"/>
    <property type="project" value="UniProtKB-UniRule"/>
</dbReference>
<dbReference type="GO" id="GO:0070006">
    <property type="term" value="F:metalloaminopeptidase activity"/>
    <property type="evidence" value="ECO:0007669"/>
    <property type="project" value="InterPro"/>
</dbReference>
<dbReference type="GO" id="GO:0006508">
    <property type="term" value="P:proteolysis"/>
    <property type="evidence" value="ECO:0007669"/>
    <property type="project" value="UniProtKB-KW"/>
</dbReference>
<dbReference type="CDD" id="cd00433">
    <property type="entry name" value="Peptidase_M17"/>
    <property type="match status" value="1"/>
</dbReference>
<dbReference type="Gene3D" id="3.40.220.10">
    <property type="entry name" value="Leucine Aminopeptidase, subunit E, domain 1"/>
    <property type="match status" value="1"/>
</dbReference>
<dbReference type="Gene3D" id="3.40.630.10">
    <property type="entry name" value="Zn peptidases"/>
    <property type="match status" value="1"/>
</dbReference>
<dbReference type="HAMAP" id="MF_00181">
    <property type="entry name" value="Cytosol_peptidase_M17"/>
    <property type="match status" value="1"/>
</dbReference>
<dbReference type="InterPro" id="IPR011356">
    <property type="entry name" value="Leucine_aapep/pepB"/>
</dbReference>
<dbReference type="InterPro" id="IPR043472">
    <property type="entry name" value="Macro_dom-like"/>
</dbReference>
<dbReference type="InterPro" id="IPR000819">
    <property type="entry name" value="Peptidase_M17_C"/>
</dbReference>
<dbReference type="InterPro" id="IPR023042">
    <property type="entry name" value="Peptidase_M17_leu_NH2_pept"/>
</dbReference>
<dbReference type="InterPro" id="IPR008283">
    <property type="entry name" value="Peptidase_M17_N"/>
</dbReference>
<dbReference type="NCBIfam" id="NF002076">
    <property type="entry name" value="PRK00913.2-3"/>
    <property type="match status" value="1"/>
</dbReference>
<dbReference type="PANTHER" id="PTHR11963:SF23">
    <property type="entry name" value="CYTOSOL AMINOPEPTIDASE"/>
    <property type="match status" value="1"/>
</dbReference>
<dbReference type="PANTHER" id="PTHR11963">
    <property type="entry name" value="LEUCINE AMINOPEPTIDASE-RELATED"/>
    <property type="match status" value="1"/>
</dbReference>
<dbReference type="Pfam" id="PF00883">
    <property type="entry name" value="Peptidase_M17"/>
    <property type="match status" value="1"/>
</dbReference>
<dbReference type="Pfam" id="PF02789">
    <property type="entry name" value="Peptidase_M17_N"/>
    <property type="match status" value="1"/>
</dbReference>
<dbReference type="PRINTS" id="PR00481">
    <property type="entry name" value="LAMNOPPTDASE"/>
</dbReference>
<dbReference type="SUPFAM" id="SSF52949">
    <property type="entry name" value="Macro domain-like"/>
    <property type="match status" value="1"/>
</dbReference>
<dbReference type="SUPFAM" id="SSF53187">
    <property type="entry name" value="Zn-dependent exopeptidases"/>
    <property type="match status" value="1"/>
</dbReference>
<dbReference type="PROSITE" id="PS00631">
    <property type="entry name" value="CYTOSOL_AP"/>
    <property type="match status" value="1"/>
</dbReference>
<organism>
    <name type="scientific">Synechococcus sp. (strain RCC307)</name>
    <dbReference type="NCBI Taxonomy" id="316278"/>
    <lineage>
        <taxon>Bacteria</taxon>
        <taxon>Bacillati</taxon>
        <taxon>Cyanobacteriota</taxon>
        <taxon>Cyanophyceae</taxon>
        <taxon>Synechococcales</taxon>
        <taxon>Synechococcaceae</taxon>
        <taxon>Synechococcus</taxon>
    </lineage>
</organism>
<feature type="chain" id="PRO_1000019992" description="Probable cytosol aminopeptidase">
    <location>
        <begin position="1"/>
        <end position="501"/>
    </location>
</feature>
<feature type="active site" evidence="1">
    <location>
        <position position="269"/>
    </location>
</feature>
<feature type="active site" evidence="1">
    <location>
        <position position="345"/>
    </location>
</feature>
<feature type="binding site" evidence="1">
    <location>
        <position position="257"/>
    </location>
    <ligand>
        <name>Mn(2+)</name>
        <dbReference type="ChEBI" id="CHEBI:29035"/>
        <label>2</label>
    </ligand>
</feature>
<feature type="binding site" evidence="1">
    <location>
        <position position="262"/>
    </location>
    <ligand>
        <name>Mn(2+)</name>
        <dbReference type="ChEBI" id="CHEBI:29035"/>
        <label>1</label>
    </ligand>
</feature>
<feature type="binding site" evidence="1">
    <location>
        <position position="262"/>
    </location>
    <ligand>
        <name>Mn(2+)</name>
        <dbReference type="ChEBI" id="CHEBI:29035"/>
        <label>2</label>
    </ligand>
</feature>
<feature type="binding site" evidence="1">
    <location>
        <position position="281"/>
    </location>
    <ligand>
        <name>Mn(2+)</name>
        <dbReference type="ChEBI" id="CHEBI:29035"/>
        <label>2</label>
    </ligand>
</feature>
<feature type="binding site" evidence="1">
    <location>
        <position position="341"/>
    </location>
    <ligand>
        <name>Mn(2+)</name>
        <dbReference type="ChEBI" id="CHEBI:29035"/>
        <label>1</label>
    </ligand>
</feature>
<feature type="binding site" evidence="1">
    <location>
        <position position="343"/>
    </location>
    <ligand>
        <name>Mn(2+)</name>
        <dbReference type="ChEBI" id="CHEBI:29035"/>
        <label>1</label>
    </ligand>
</feature>
<feature type="binding site" evidence="1">
    <location>
        <position position="343"/>
    </location>
    <ligand>
        <name>Mn(2+)</name>
        <dbReference type="ChEBI" id="CHEBI:29035"/>
        <label>2</label>
    </ligand>
</feature>